<accession>B4F8I5</accession>
<gene>
    <name evidence="4" type="primary">COAC2</name>
    <name evidence="5" type="synonym">MCF1</name>
    <name evidence="4" type="ORF">GRMZM2G161299</name>
</gene>
<feature type="chain" id="PRO_0000440988" description="Mitochondrial carrier protein CoAc2">
    <location>
        <begin position="1"/>
        <end position="335"/>
    </location>
</feature>
<feature type="transmembrane region" description="Helical; Name=1" evidence="5">
    <location>
        <begin position="12"/>
        <end position="32"/>
    </location>
</feature>
<feature type="transmembrane region" description="Helical; Name=2" evidence="5">
    <location>
        <begin position="75"/>
        <end position="95"/>
    </location>
</feature>
<feature type="transmembrane region" description="Helical; Name=3" evidence="1">
    <location>
        <begin position="119"/>
        <end position="139"/>
    </location>
</feature>
<feature type="transmembrane region" description="Helical; Name=4" evidence="5">
    <location>
        <begin position="187"/>
        <end position="207"/>
    </location>
</feature>
<feature type="transmembrane region" description="Helical; Name=5" evidence="1">
    <location>
        <begin position="225"/>
        <end position="242"/>
    </location>
</feature>
<feature type="transmembrane region" description="Helical; Name=6" evidence="1">
    <location>
        <begin position="280"/>
        <end position="302"/>
    </location>
</feature>
<feature type="repeat" description="Solcar 1" evidence="2">
    <location>
        <begin position="17"/>
        <end position="103"/>
    </location>
</feature>
<feature type="repeat" description="Solcar 2" evidence="2">
    <location>
        <begin position="113"/>
        <end position="212"/>
    </location>
</feature>
<feature type="repeat" description="Solcar 3" evidence="2">
    <location>
        <begin position="219"/>
        <end position="308"/>
    </location>
</feature>
<organism>
    <name type="scientific">Zea mays</name>
    <name type="common">Maize</name>
    <dbReference type="NCBI Taxonomy" id="4577"/>
    <lineage>
        <taxon>Eukaryota</taxon>
        <taxon>Viridiplantae</taxon>
        <taxon>Streptophyta</taxon>
        <taxon>Embryophyta</taxon>
        <taxon>Tracheophyta</taxon>
        <taxon>Spermatophyta</taxon>
        <taxon>Magnoliopsida</taxon>
        <taxon>Liliopsida</taxon>
        <taxon>Poales</taxon>
        <taxon>Poaceae</taxon>
        <taxon>PACMAD clade</taxon>
        <taxon>Panicoideae</taxon>
        <taxon>Andropogonodae</taxon>
        <taxon>Andropogoneae</taxon>
        <taxon>Tripsacinae</taxon>
        <taxon>Zea</taxon>
    </lineage>
</organism>
<evidence type="ECO:0000255" key="1"/>
<evidence type="ECO:0000255" key="2">
    <source>
        <dbReference type="PROSITE-ProRule" id="PRU00282"/>
    </source>
</evidence>
<evidence type="ECO:0000269" key="3">
    <source>
    </source>
</evidence>
<evidence type="ECO:0000303" key="4">
    <source>
    </source>
</evidence>
<evidence type="ECO:0000305" key="5"/>
<keyword id="KW-0472">Membrane</keyword>
<keyword id="KW-0496">Mitochondrion</keyword>
<keyword id="KW-0999">Mitochondrion inner membrane</keyword>
<keyword id="KW-1185">Reference proteome</keyword>
<keyword id="KW-0677">Repeat</keyword>
<keyword id="KW-0812">Transmembrane</keyword>
<keyword id="KW-1133">Transmembrane helix</keyword>
<keyword id="KW-0813">Transport</keyword>
<comment type="function">
    <text evidence="3">Required for the accumulation of coenzyme A in the mitochondrial matrix.</text>
</comment>
<comment type="subcellular location">
    <subcellularLocation>
        <location evidence="3">Mitochondrion inner membrane</location>
        <topology evidence="1">Multi-pass membrane protein</topology>
    </subcellularLocation>
</comment>
<comment type="tissue specificity">
    <text evidence="3">Expressed throughout the plant.</text>
</comment>
<comment type="similarity">
    <text evidence="5">Belongs to the mitochondrial carrier (TC 2.A.29) family.</text>
</comment>
<protein>
    <recommendedName>
        <fullName evidence="5">Mitochondrial carrier protein CoAc2</fullName>
    </recommendedName>
    <alternativeName>
        <fullName evidence="5">Mitochondrial carrier family protein 1</fullName>
    </alternativeName>
    <alternativeName>
        <fullName evidence="5">Mitochondrial coenzyme A transporter CoAc2</fullName>
    </alternativeName>
    <alternativeName>
        <fullName evidence="4">ZmCoAc2</fullName>
    </alternativeName>
</protein>
<dbReference type="EMBL" id="CM000781">
    <property type="protein sequence ID" value="AQK70446.1"/>
    <property type="molecule type" value="Genomic_DNA"/>
</dbReference>
<dbReference type="EMBL" id="BT033423">
    <property type="protein sequence ID" value="ACF78428.1"/>
    <property type="molecule type" value="mRNA"/>
</dbReference>
<dbReference type="RefSeq" id="NP_001130260.1">
    <property type="nucleotide sequence ID" value="NM_001136788.1"/>
</dbReference>
<dbReference type="SMR" id="B4F8I5"/>
<dbReference type="FunCoup" id="B4F8I5">
    <property type="interactions" value="551"/>
</dbReference>
<dbReference type="STRING" id="4577.B4F8I5"/>
<dbReference type="PaxDb" id="4577-GRMZM2G161299_P01"/>
<dbReference type="EnsemblPlants" id="Zm00001eb239690_T003">
    <property type="protein sequence ID" value="Zm00001eb239690_P003"/>
    <property type="gene ID" value="Zm00001eb239690"/>
</dbReference>
<dbReference type="GeneID" id="100191354"/>
<dbReference type="Gramene" id="Zm00001eb239690_T003">
    <property type="protein sequence ID" value="Zm00001eb239690_P003"/>
    <property type="gene ID" value="Zm00001eb239690"/>
</dbReference>
<dbReference type="KEGG" id="zma:100191354"/>
<dbReference type="MaizeGDB" id="960724"/>
<dbReference type="eggNOG" id="KOG0752">
    <property type="taxonomic scope" value="Eukaryota"/>
</dbReference>
<dbReference type="InParanoid" id="B4F8I5"/>
<dbReference type="OMA" id="VYERMKW"/>
<dbReference type="OrthoDB" id="270584at2759"/>
<dbReference type="Proteomes" id="UP000007305">
    <property type="component" value="Chromosome 5"/>
</dbReference>
<dbReference type="ExpressionAtlas" id="B4F8I5">
    <property type="expression patterns" value="baseline and differential"/>
</dbReference>
<dbReference type="GO" id="GO:0005743">
    <property type="term" value="C:mitochondrial inner membrane"/>
    <property type="evidence" value="ECO:0000314"/>
    <property type="project" value="UniProtKB"/>
</dbReference>
<dbReference type="GO" id="GO:0015228">
    <property type="term" value="F:coenzyme A transmembrane transporter activity"/>
    <property type="evidence" value="ECO:0000316"/>
    <property type="project" value="UniProtKB"/>
</dbReference>
<dbReference type="GO" id="GO:1990559">
    <property type="term" value="P:mitochondrial coenzyme A transmembrane transport"/>
    <property type="evidence" value="ECO:0000316"/>
    <property type="project" value="UniProtKB"/>
</dbReference>
<dbReference type="FunFam" id="1.50.40.10:FF:000014">
    <property type="entry name" value="mitochondrial coenzyme A transporter SLC25A42"/>
    <property type="match status" value="1"/>
</dbReference>
<dbReference type="Gene3D" id="1.50.40.10">
    <property type="entry name" value="Mitochondrial carrier domain"/>
    <property type="match status" value="1"/>
</dbReference>
<dbReference type="InterPro" id="IPR002067">
    <property type="entry name" value="Mit_carrier"/>
</dbReference>
<dbReference type="InterPro" id="IPR018108">
    <property type="entry name" value="Mitochondrial_sb/sol_carrier"/>
</dbReference>
<dbReference type="InterPro" id="IPR023395">
    <property type="entry name" value="Mt_carrier_dom_sf"/>
</dbReference>
<dbReference type="PANTHER" id="PTHR24089">
    <property type="entry name" value="SOLUTE CARRIER FAMILY 25"/>
    <property type="match status" value="1"/>
</dbReference>
<dbReference type="Pfam" id="PF00153">
    <property type="entry name" value="Mito_carr"/>
    <property type="match status" value="3"/>
</dbReference>
<dbReference type="PRINTS" id="PR00926">
    <property type="entry name" value="MITOCARRIER"/>
</dbReference>
<dbReference type="SUPFAM" id="SSF103506">
    <property type="entry name" value="Mitochondrial carrier"/>
    <property type="match status" value="1"/>
</dbReference>
<dbReference type="PROSITE" id="PS50920">
    <property type="entry name" value="SOLCAR"/>
    <property type="match status" value="3"/>
</dbReference>
<sequence length="335" mass="36462">MDARAREAAETSGPGLPLAVRELLAGGVAGGVAKTAVAPLERVKILFQTRRAEFHGSGLIGSFRTIYRTEGLLGFYRGNGASVARIVPYAALHYMAYEEYRRWIILGFPNVEQGPVLDLVAGSIAGGTAVICTYPLDLVRTKLAYQVKGAVSVGFRESKPSEQVYKGIMDCVKTIYRQNGLKGIYRGMAPSLYGIFPYSGLKFYFYEKMKSHVPEEHRKGIIAKLGCGSVAGLLGQTITYPLDVVRRQMQVQALSSSSLVGRGTFESLVMIAKQQGWRQLFSGLSINYLKVVPSVAIGFTVYDSMKVCLKVPSREETAVAVLAEERSNTAPIPSS</sequence>
<reference key="1">
    <citation type="journal article" date="2009" name="Science">
        <title>The B73 maize genome: complexity, diversity, and dynamics.</title>
        <authorList>
            <person name="Schnable P.S."/>
            <person name="Ware D."/>
            <person name="Fulton R.S."/>
            <person name="Stein J.C."/>
            <person name="Wei F."/>
            <person name="Pasternak S."/>
            <person name="Liang C."/>
            <person name="Zhang J."/>
            <person name="Fulton L."/>
            <person name="Graves T.A."/>
            <person name="Minx P."/>
            <person name="Reily A.D."/>
            <person name="Courtney L."/>
            <person name="Kruchowski S.S."/>
            <person name="Tomlinson C."/>
            <person name="Strong C."/>
            <person name="Delehaunty K."/>
            <person name="Fronick C."/>
            <person name="Courtney B."/>
            <person name="Rock S.M."/>
            <person name="Belter E."/>
            <person name="Du F."/>
            <person name="Kim K."/>
            <person name="Abbott R.M."/>
            <person name="Cotton M."/>
            <person name="Levy A."/>
            <person name="Marchetto P."/>
            <person name="Ochoa K."/>
            <person name="Jackson S.M."/>
            <person name="Gillam B."/>
            <person name="Chen W."/>
            <person name="Yan L."/>
            <person name="Higginbotham J."/>
            <person name="Cardenas M."/>
            <person name="Waligorski J."/>
            <person name="Applebaum E."/>
            <person name="Phelps L."/>
            <person name="Falcone J."/>
            <person name="Kanchi K."/>
            <person name="Thane T."/>
            <person name="Scimone A."/>
            <person name="Thane N."/>
            <person name="Henke J."/>
            <person name="Wang T."/>
            <person name="Ruppert J."/>
            <person name="Shah N."/>
            <person name="Rotter K."/>
            <person name="Hodges J."/>
            <person name="Ingenthron E."/>
            <person name="Cordes M."/>
            <person name="Kohlberg S."/>
            <person name="Sgro J."/>
            <person name="Delgado B."/>
            <person name="Mead K."/>
            <person name="Chinwalla A."/>
            <person name="Leonard S."/>
            <person name="Crouse K."/>
            <person name="Collura K."/>
            <person name="Kudrna D."/>
            <person name="Currie J."/>
            <person name="He R."/>
            <person name="Angelova A."/>
            <person name="Rajasekar S."/>
            <person name="Mueller T."/>
            <person name="Lomeli R."/>
            <person name="Scara G."/>
            <person name="Ko A."/>
            <person name="Delaney K."/>
            <person name="Wissotski M."/>
            <person name="Lopez G."/>
            <person name="Campos D."/>
            <person name="Braidotti M."/>
            <person name="Ashley E."/>
            <person name="Golser W."/>
            <person name="Kim H."/>
            <person name="Lee S."/>
            <person name="Lin J."/>
            <person name="Dujmic Z."/>
            <person name="Kim W."/>
            <person name="Talag J."/>
            <person name="Zuccolo A."/>
            <person name="Fan C."/>
            <person name="Sebastian A."/>
            <person name="Kramer M."/>
            <person name="Spiegel L."/>
            <person name="Nascimento L."/>
            <person name="Zutavern T."/>
            <person name="Miller B."/>
            <person name="Ambroise C."/>
            <person name="Muller S."/>
            <person name="Spooner W."/>
            <person name="Narechania A."/>
            <person name="Ren L."/>
            <person name="Wei S."/>
            <person name="Kumari S."/>
            <person name="Faga B."/>
            <person name="Levy M.J."/>
            <person name="McMahan L."/>
            <person name="Van Buren P."/>
            <person name="Vaughn M.W."/>
            <person name="Ying K."/>
            <person name="Yeh C.-T."/>
            <person name="Emrich S.J."/>
            <person name="Jia Y."/>
            <person name="Kalyanaraman A."/>
            <person name="Hsia A.-P."/>
            <person name="Barbazuk W.B."/>
            <person name="Baucom R.S."/>
            <person name="Brutnell T.P."/>
            <person name="Carpita N.C."/>
            <person name="Chaparro C."/>
            <person name="Chia J.-M."/>
            <person name="Deragon J.-M."/>
            <person name="Estill J.C."/>
            <person name="Fu Y."/>
            <person name="Jeddeloh J.A."/>
            <person name="Han Y."/>
            <person name="Lee H."/>
            <person name="Li P."/>
            <person name="Lisch D.R."/>
            <person name="Liu S."/>
            <person name="Liu Z."/>
            <person name="Nagel D.H."/>
            <person name="McCann M.C."/>
            <person name="SanMiguel P."/>
            <person name="Myers A.M."/>
            <person name="Nettleton D."/>
            <person name="Nguyen J."/>
            <person name="Penning B.W."/>
            <person name="Ponnala L."/>
            <person name="Schneider K.L."/>
            <person name="Schwartz D.C."/>
            <person name="Sharma A."/>
            <person name="Soderlund C."/>
            <person name="Springer N.M."/>
            <person name="Sun Q."/>
            <person name="Wang H."/>
            <person name="Waterman M."/>
            <person name="Westerman R."/>
            <person name="Wolfgruber T.K."/>
            <person name="Yang L."/>
            <person name="Yu Y."/>
            <person name="Zhang L."/>
            <person name="Zhou S."/>
            <person name="Zhu Q."/>
            <person name="Bennetzen J.L."/>
            <person name="Dawe R.K."/>
            <person name="Jiang J."/>
            <person name="Jiang N."/>
            <person name="Presting G.G."/>
            <person name="Wessler S.R."/>
            <person name="Aluru S."/>
            <person name="Martienssen R.A."/>
            <person name="Clifton S.W."/>
            <person name="McCombie W.R."/>
            <person name="Wing R.A."/>
            <person name="Wilson R.K."/>
        </authorList>
    </citation>
    <scope>NUCLEOTIDE SEQUENCE [LARGE SCALE GENOMIC DNA]</scope>
    <source>
        <strain>cv. B73</strain>
    </source>
</reference>
<reference key="2">
    <citation type="journal article" date="2009" name="PLoS Genet.">
        <title>Sequencing, mapping, and analysis of 27,455 maize full-length cDNAs.</title>
        <authorList>
            <person name="Soderlund C."/>
            <person name="Descour A."/>
            <person name="Kudrna D."/>
            <person name="Bomhoff M."/>
            <person name="Boyd L."/>
            <person name="Currie J."/>
            <person name="Angelova A."/>
            <person name="Collura K."/>
            <person name="Wissotski M."/>
            <person name="Ashley E."/>
            <person name="Morrow D."/>
            <person name="Fernandes J."/>
            <person name="Walbot V."/>
            <person name="Yu Y."/>
        </authorList>
    </citation>
    <scope>NUCLEOTIDE SEQUENCE [LARGE SCALE MRNA]</scope>
    <source>
        <strain>cv. B73</strain>
    </source>
</reference>
<reference key="3">
    <citation type="journal article" date="2013" name="Plant Physiol.">
        <title>Identification of mitochondrial coenzyme a transporters from maize and Arabidopsis.</title>
        <authorList>
            <person name="Zallot R."/>
            <person name="Agrimi G."/>
            <person name="Lerma-Ortiz C."/>
            <person name="Teresinski H.J."/>
            <person name="Frelin O."/>
            <person name="Ellens K.W."/>
            <person name="Castegna A."/>
            <person name="Russo A."/>
            <person name="de Crecy-Lagard V."/>
            <person name="Mullen R.T."/>
            <person name="Palmieri F."/>
            <person name="Hanson A.D."/>
        </authorList>
    </citation>
    <scope>FUNCTION</scope>
    <scope>SUBCELLULAR LOCATION</scope>
    <scope>TISSUE SPECIFICITY</scope>
</reference>
<proteinExistence type="evidence at transcript level"/>
<name>COAC2_MAIZE</name>